<protein>
    <recommendedName>
        <fullName evidence="1">O-phospho-L-seryl-tRNA:Cys-tRNA synthase 1</fullName>
        <ecNumber evidence="1">2.5.1.73</ecNumber>
    </recommendedName>
    <alternativeName>
        <fullName evidence="1">Sep-tRNA:Cys-tRNA synthase 1</fullName>
        <shortName evidence="1">SepCysS 1</shortName>
    </alternativeName>
</protein>
<name>SPSS1_METHJ</name>
<reference key="1">
    <citation type="journal article" date="2016" name="Stand. Genomic Sci.">
        <title>Complete genome sequence of Methanospirillum hungatei type strain JF1.</title>
        <authorList>
            <person name="Gunsalus R.P."/>
            <person name="Cook L.E."/>
            <person name="Crable B."/>
            <person name="Rohlin L."/>
            <person name="McDonald E."/>
            <person name="Mouttaki H."/>
            <person name="Sieber J.R."/>
            <person name="Poweleit N."/>
            <person name="Zhou H."/>
            <person name="Lapidus A.L."/>
            <person name="Daligault H.E."/>
            <person name="Land M."/>
            <person name="Gilna P."/>
            <person name="Ivanova N."/>
            <person name="Kyrpides N."/>
            <person name="Culley D.E."/>
            <person name="McInerney M.J."/>
        </authorList>
    </citation>
    <scope>NUCLEOTIDE SEQUENCE [LARGE SCALE GENOMIC DNA]</scope>
    <source>
        <strain>ATCC 27890 / DSM 864 / NBRC 100397 / JF-1</strain>
    </source>
</reference>
<gene>
    <name type="ordered locus">Mhun_0071</name>
</gene>
<feature type="chain" id="PRO_0000359463" description="O-phospho-L-seryl-tRNA:Cys-tRNA synthase 1">
    <location>
        <begin position="1"/>
        <end position="393"/>
    </location>
</feature>
<feature type="binding site" evidence="1">
    <location>
        <begin position="85"/>
        <end position="86"/>
    </location>
    <ligand>
        <name>pyridoxal 5'-phosphate</name>
        <dbReference type="ChEBI" id="CHEBI:597326"/>
    </ligand>
</feature>
<feature type="binding site" evidence="1">
    <location>
        <position position="190"/>
    </location>
    <ligand>
        <name>pyridoxal 5'-phosphate</name>
        <dbReference type="ChEBI" id="CHEBI:597326"/>
    </ligand>
</feature>
<feature type="binding site" evidence="1">
    <location>
        <begin position="213"/>
        <end position="215"/>
    </location>
    <ligand>
        <name>pyridoxal 5'-phosphate</name>
        <dbReference type="ChEBI" id="CHEBI:597326"/>
    </ligand>
</feature>
<feature type="modified residue" description="N6-(pyridoxal phosphate)lysine" evidence="1">
    <location>
        <position position="216"/>
    </location>
</feature>
<evidence type="ECO:0000255" key="1">
    <source>
        <dbReference type="HAMAP-Rule" id="MF_01675"/>
    </source>
</evidence>
<dbReference type="EC" id="2.5.1.73" evidence="1"/>
<dbReference type="EMBL" id="CP000254">
    <property type="protein sequence ID" value="ABD39849.1"/>
    <property type="molecule type" value="Genomic_DNA"/>
</dbReference>
<dbReference type="RefSeq" id="WP_011447146.1">
    <property type="nucleotide sequence ID" value="NC_007796.1"/>
</dbReference>
<dbReference type="SMR" id="Q2FLN5"/>
<dbReference type="FunCoup" id="Q2FLN5">
    <property type="interactions" value="21"/>
</dbReference>
<dbReference type="STRING" id="323259.Mhun_0071"/>
<dbReference type="EnsemblBacteria" id="ABD39849">
    <property type="protein sequence ID" value="ABD39849"/>
    <property type="gene ID" value="Mhun_0071"/>
</dbReference>
<dbReference type="GeneID" id="3923134"/>
<dbReference type="KEGG" id="mhu:Mhun_0071"/>
<dbReference type="eggNOG" id="arCOG00091">
    <property type="taxonomic scope" value="Archaea"/>
</dbReference>
<dbReference type="HOGENOM" id="CLU_060476_0_0_2"/>
<dbReference type="InParanoid" id="Q2FLN5"/>
<dbReference type="OrthoDB" id="5817at2157"/>
<dbReference type="Proteomes" id="UP000001941">
    <property type="component" value="Chromosome"/>
</dbReference>
<dbReference type="GO" id="GO:0043766">
    <property type="term" value="F:Sep-tRNA:Cys-tRNA synthase activity"/>
    <property type="evidence" value="ECO:0007669"/>
    <property type="project" value="UniProtKB-UniRule"/>
</dbReference>
<dbReference type="GO" id="GO:0006412">
    <property type="term" value="P:translation"/>
    <property type="evidence" value="ECO:0007669"/>
    <property type="project" value="UniProtKB-KW"/>
</dbReference>
<dbReference type="Gene3D" id="3.90.1150.10">
    <property type="entry name" value="Aspartate Aminotransferase, domain 1"/>
    <property type="match status" value="1"/>
</dbReference>
<dbReference type="Gene3D" id="3.40.640.10">
    <property type="entry name" value="Type I PLP-dependent aspartate aminotransferase-like (Major domain)"/>
    <property type="match status" value="1"/>
</dbReference>
<dbReference type="HAMAP" id="MF_01675">
    <property type="entry name" value="Sep_Cys_tRNA_synth"/>
    <property type="match status" value="1"/>
</dbReference>
<dbReference type="InterPro" id="IPR015424">
    <property type="entry name" value="PyrdxlP-dep_Trfase"/>
</dbReference>
<dbReference type="InterPro" id="IPR015421">
    <property type="entry name" value="PyrdxlP-dep_Trfase_major"/>
</dbReference>
<dbReference type="InterPro" id="IPR015422">
    <property type="entry name" value="PyrdxlP-dep_Trfase_small"/>
</dbReference>
<dbReference type="InterPro" id="IPR013375">
    <property type="entry name" value="Sep_Cys-tRNA_synth_arc"/>
</dbReference>
<dbReference type="InterPro" id="IPR008829">
    <property type="entry name" value="SepSecS/SepCysS"/>
</dbReference>
<dbReference type="NCBIfam" id="NF006810">
    <property type="entry name" value="PRK09331.1"/>
    <property type="match status" value="1"/>
</dbReference>
<dbReference type="NCBIfam" id="TIGR02539">
    <property type="entry name" value="SepCysS"/>
    <property type="match status" value="1"/>
</dbReference>
<dbReference type="PANTHER" id="PTHR43586">
    <property type="entry name" value="CYSTEINE DESULFURASE"/>
    <property type="match status" value="1"/>
</dbReference>
<dbReference type="PANTHER" id="PTHR43586:SF3">
    <property type="entry name" value="O-PHOSPHO-L-SERYL-TRNA:CYS-TRNA SYNTHASE"/>
    <property type="match status" value="1"/>
</dbReference>
<dbReference type="Pfam" id="PF05889">
    <property type="entry name" value="SepSecS"/>
    <property type="match status" value="1"/>
</dbReference>
<dbReference type="SUPFAM" id="SSF53383">
    <property type="entry name" value="PLP-dependent transferases"/>
    <property type="match status" value="1"/>
</dbReference>
<comment type="function">
    <text evidence="1">Converts O-phospho-L-seryl-tRNA(Cys) (Sep-tRNA(Cys)) to L-cysteinyl-tRNA(Cys) (Cys-tRNA(Cys)).</text>
</comment>
<comment type="catalytic activity">
    <reaction evidence="1">
        <text>O-phospho-L-seryl-tRNA(Cys) + hydrogen sulfide + H(+) = L-cysteinyl-tRNA(Cys) + phosphate</text>
        <dbReference type="Rhea" id="RHEA:25686"/>
        <dbReference type="Rhea" id="RHEA-COMP:9679"/>
        <dbReference type="Rhea" id="RHEA-COMP:9719"/>
        <dbReference type="ChEBI" id="CHEBI:15378"/>
        <dbReference type="ChEBI" id="CHEBI:29919"/>
        <dbReference type="ChEBI" id="CHEBI:43474"/>
        <dbReference type="ChEBI" id="CHEBI:78517"/>
        <dbReference type="ChEBI" id="CHEBI:78551"/>
        <dbReference type="EC" id="2.5.1.73"/>
    </reaction>
</comment>
<comment type="cofactor">
    <cofactor evidence="1">
        <name>pyridoxal 5'-phosphate</name>
        <dbReference type="ChEBI" id="CHEBI:597326"/>
    </cofactor>
</comment>
<comment type="subunit">
    <text evidence="1">Homodimer. Interacts with SepRS.</text>
</comment>
<comment type="similarity">
    <text evidence="1">Belongs to the SepCysS family.</text>
</comment>
<proteinExistence type="inferred from homology"/>
<organism>
    <name type="scientific">Methanospirillum hungatei JF-1 (strain ATCC 27890 / DSM 864 / NBRC 100397 / JF-1)</name>
    <dbReference type="NCBI Taxonomy" id="323259"/>
    <lineage>
        <taxon>Archaea</taxon>
        <taxon>Methanobacteriati</taxon>
        <taxon>Methanobacteriota</taxon>
        <taxon>Stenosarchaea group</taxon>
        <taxon>Methanomicrobia</taxon>
        <taxon>Methanomicrobiales</taxon>
        <taxon>Methanospirillaceae</taxon>
        <taxon>Methanospirillum</taxon>
    </lineage>
</organism>
<sequence length="393" mass="42991">MNCGEGIDSRQIDELFINLDPIQAGGRLTTDAMKAVLAYGDGYSVCDHCTKPFRLDHISKPPLAEFHRDLASFLNMDVARLVPGARRGFQAVASAMVKPGDPVLLTAYSHYTEFLSVEQSKGTAFEIPADESHIITPDAAAARIEEVIKTTGKTPALMFIEQVDYQYGNQHPVSDLSKVAHQYDIPVLCNGAYTIGIMDVNGKELGADFLVGSGHKSMAAPAPSGVLATTSEWAEKVFRTTGIKGDLTGRTFGVKEVEMMGCTLMGVTSVGMMASFPHVKRRVKEFDAQVQYVNRIVDALLTIEGTKVQSEYPRKHTLTRMNTTDSFDTVAKTHKKKGFFLTSALRERGIAGILPGSTRVWKFNSYGITSEQADYIAESFIEIAEKEGLVCSR</sequence>
<keyword id="KW-0648">Protein biosynthesis</keyword>
<keyword id="KW-0663">Pyridoxal phosphate</keyword>
<keyword id="KW-1185">Reference proteome</keyword>
<keyword id="KW-0808">Transferase</keyword>
<accession>Q2FLN5</accession>